<gene>
    <name evidence="1" type="primary">coaA</name>
    <name type="ordered locus">Plav_1229</name>
</gene>
<comment type="catalytic activity">
    <reaction evidence="1">
        <text>(R)-pantothenate + ATP = (R)-4'-phosphopantothenate + ADP + H(+)</text>
        <dbReference type="Rhea" id="RHEA:16373"/>
        <dbReference type="ChEBI" id="CHEBI:10986"/>
        <dbReference type="ChEBI" id="CHEBI:15378"/>
        <dbReference type="ChEBI" id="CHEBI:29032"/>
        <dbReference type="ChEBI" id="CHEBI:30616"/>
        <dbReference type="ChEBI" id="CHEBI:456216"/>
        <dbReference type="EC" id="2.7.1.33"/>
    </reaction>
</comment>
<comment type="pathway">
    <text evidence="1">Cofactor biosynthesis; coenzyme A biosynthesis; CoA from (R)-pantothenate: step 1/5.</text>
</comment>
<comment type="subcellular location">
    <subcellularLocation>
        <location evidence="1">Cytoplasm</location>
    </subcellularLocation>
</comment>
<comment type="similarity">
    <text evidence="1">Belongs to the prokaryotic pantothenate kinase family.</text>
</comment>
<dbReference type="EC" id="2.7.1.33" evidence="1"/>
<dbReference type="EMBL" id="CP000774">
    <property type="protein sequence ID" value="ABS62849.1"/>
    <property type="molecule type" value="Genomic_DNA"/>
</dbReference>
<dbReference type="RefSeq" id="WP_012110117.1">
    <property type="nucleotide sequence ID" value="NC_009719.1"/>
</dbReference>
<dbReference type="SMR" id="A7HSG6"/>
<dbReference type="STRING" id="402881.Plav_1229"/>
<dbReference type="KEGG" id="pla:Plav_1229"/>
<dbReference type="eggNOG" id="COG1072">
    <property type="taxonomic scope" value="Bacteria"/>
</dbReference>
<dbReference type="HOGENOM" id="CLU_053818_1_1_5"/>
<dbReference type="OrthoDB" id="1550976at2"/>
<dbReference type="UniPathway" id="UPA00241">
    <property type="reaction ID" value="UER00352"/>
</dbReference>
<dbReference type="Proteomes" id="UP000006377">
    <property type="component" value="Chromosome"/>
</dbReference>
<dbReference type="GO" id="GO:0005737">
    <property type="term" value="C:cytoplasm"/>
    <property type="evidence" value="ECO:0007669"/>
    <property type="project" value="UniProtKB-SubCell"/>
</dbReference>
<dbReference type="GO" id="GO:0005524">
    <property type="term" value="F:ATP binding"/>
    <property type="evidence" value="ECO:0007669"/>
    <property type="project" value="UniProtKB-UniRule"/>
</dbReference>
<dbReference type="GO" id="GO:0004594">
    <property type="term" value="F:pantothenate kinase activity"/>
    <property type="evidence" value="ECO:0007669"/>
    <property type="project" value="UniProtKB-UniRule"/>
</dbReference>
<dbReference type="GO" id="GO:0015937">
    <property type="term" value="P:coenzyme A biosynthetic process"/>
    <property type="evidence" value="ECO:0007669"/>
    <property type="project" value="UniProtKB-UniRule"/>
</dbReference>
<dbReference type="CDD" id="cd02025">
    <property type="entry name" value="PanK"/>
    <property type="match status" value="1"/>
</dbReference>
<dbReference type="Gene3D" id="3.40.50.300">
    <property type="entry name" value="P-loop containing nucleotide triphosphate hydrolases"/>
    <property type="match status" value="1"/>
</dbReference>
<dbReference type="HAMAP" id="MF_00215">
    <property type="entry name" value="Pantothen_kinase_1"/>
    <property type="match status" value="1"/>
</dbReference>
<dbReference type="InterPro" id="IPR027417">
    <property type="entry name" value="P-loop_NTPase"/>
</dbReference>
<dbReference type="InterPro" id="IPR004566">
    <property type="entry name" value="PanK"/>
</dbReference>
<dbReference type="InterPro" id="IPR006083">
    <property type="entry name" value="PRK/URK"/>
</dbReference>
<dbReference type="NCBIfam" id="TIGR00554">
    <property type="entry name" value="panK_bact"/>
    <property type="match status" value="1"/>
</dbReference>
<dbReference type="PANTHER" id="PTHR10285">
    <property type="entry name" value="URIDINE KINASE"/>
    <property type="match status" value="1"/>
</dbReference>
<dbReference type="Pfam" id="PF00485">
    <property type="entry name" value="PRK"/>
    <property type="match status" value="1"/>
</dbReference>
<dbReference type="PIRSF" id="PIRSF000545">
    <property type="entry name" value="Pantothenate_kin"/>
    <property type="match status" value="1"/>
</dbReference>
<dbReference type="SUPFAM" id="SSF52540">
    <property type="entry name" value="P-loop containing nucleoside triphosphate hydrolases"/>
    <property type="match status" value="1"/>
</dbReference>
<protein>
    <recommendedName>
        <fullName evidence="1">Pantothenate kinase</fullName>
        <ecNumber evidence="1">2.7.1.33</ecNumber>
    </recommendedName>
    <alternativeName>
        <fullName evidence="1">Pantothenic acid kinase</fullName>
    </alternativeName>
</protein>
<name>COAA_PARL1</name>
<organism>
    <name type="scientific">Parvibaculum lavamentivorans (strain DS-1 / DSM 13023 / NCIMB 13966)</name>
    <dbReference type="NCBI Taxonomy" id="402881"/>
    <lineage>
        <taxon>Bacteria</taxon>
        <taxon>Pseudomonadati</taxon>
        <taxon>Pseudomonadota</taxon>
        <taxon>Alphaproteobacteria</taxon>
        <taxon>Hyphomicrobiales</taxon>
        <taxon>Parvibaculaceae</taxon>
        <taxon>Parvibaculum</taxon>
    </lineage>
</organism>
<sequence>MGDDALTADSGRDETQSLSPFRYFTAAEWGRLRQDTPLPLSQGELEELKGFGERISLDEVSEIYLPLSRLLNLYVGETQELYRVTSDFLGREQDKVPYIIGVAGSVAVGKSTTARILRTLLARWPNHPKVDLITTDGFLYPNKVLEERGLMQRKGFPESFDIKRLLRFLSDVKAGSRHVEAPVYSHFTYDILPGETIPVDYPDILVVEGLNVLQPWKPADGDEPQPFVSDFFDFSIYLDADEASIRRWYIERFLSLRRTSFKDPAAYFHRYSKLTEEEAVETADAIWTSINLANLRKNILPTRQRADLILRKGDDHRIRDVLLRKL</sequence>
<feature type="chain" id="PRO_0000325559" description="Pantothenate kinase">
    <location>
        <begin position="1"/>
        <end position="326"/>
    </location>
</feature>
<feature type="binding site" evidence="1">
    <location>
        <begin position="104"/>
        <end position="111"/>
    </location>
    <ligand>
        <name>ATP</name>
        <dbReference type="ChEBI" id="CHEBI:30616"/>
    </ligand>
</feature>
<evidence type="ECO:0000255" key="1">
    <source>
        <dbReference type="HAMAP-Rule" id="MF_00215"/>
    </source>
</evidence>
<keyword id="KW-0067">ATP-binding</keyword>
<keyword id="KW-0173">Coenzyme A biosynthesis</keyword>
<keyword id="KW-0963">Cytoplasm</keyword>
<keyword id="KW-0418">Kinase</keyword>
<keyword id="KW-0547">Nucleotide-binding</keyword>
<keyword id="KW-1185">Reference proteome</keyword>
<keyword id="KW-0808">Transferase</keyword>
<reference key="1">
    <citation type="journal article" date="2011" name="Stand. Genomic Sci.">
        <title>Complete genome sequence of Parvibaculum lavamentivorans type strain (DS-1(T)).</title>
        <authorList>
            <person name="Schleheck D."/>
            <person name="Weiss M."/>
            <person name="Pitluck S."/>
            <person name="Bruce D."/>
            <person name="Land M.L."/>
            <person name="Han S."/>
            <person name="Saunders E."/>
            <person name="Tapia R."/>
            <person name="Detter C."/>
            <person name="Brettin T."/>
            <person name="Han J."/>
            <person name="Woyke T."/>
            <person name="Goodwin L."/>
            <person name="Pennacchio L."/>
            <person name="Nolan M."/>
            <person name="Cook A.M."/>
            <person name="Kjelleberg S."/>
            <person name="Thomas T."/>
        </authorList>
    </citation>
    <scope>NUCLEOTIDE SEQUENCE [LARGE SCALE GENOMIC DNA]</scope>
    <source>
        <strain>DS-1 / DSM 13023 / NCIMB 13966</strain>
    </source>
</reference>
<accession>A7HSG6</accession>
<proteinExistence type="inferred from homology"/>